<dbReference type="EMBL" id="AF243438">
    <property type="protein sequence ID" value="AAG14263.1"/>
    <property type="molecule type" value="Genomic_DNA"/>
</dbReference>
<dbReference type="RefSeq" id="YP_001034006.1">
    <property type="nucleotide sequence ID" value="NC_002229.3"/>
</dbReference>
<dbReference type="GeneID" id="4811465"/>
<dbReference type="KEGG" id="vg:4811465"/>
<dbReference type="Proteomes" id="UP000008072">
    <property type="component" value="Segment"/>
</dbReference>
<dbReference type="GO" id="GO:0044204">
    <property type="term" value="C:host cell nuclear matrix"/>
    <property type="evidence" value="ECO:0007669"/>
    <property type="project" value="UniProtKB-SubCell"/>
</dbReference>
<dbReference type="GO" id="GO:0019033">
    <property type="term" value="C:viral tegument"/>
    <property type="evidence" value="ECO:0007669"/>
    <property type="project" value="UniProtKB-SubCell"/>
</dbReference>
<dbReference type="GO" id="GO:0008270">
    <property type="term" value="F:zinc ion binding"/>
    <property type="evidence" value="ECO:0007669"/>
    <property type="project" value="InterPro"/>
</dbReference>
<dbReference type="InterPro" id="IPR000714">
    <property type="entry name" value="EHV_Unk"/>
</dbReference>
<dbReference type="Pfam" id="PF02053">
    <property type="entry name" value="Gene66"/>
    <property type="match status" value="1"/>
</dbReference>
<dbReference type="PRINTS" id="PR00957">
    <property type="entry name" value="GENE66"/>
</dbReference>
<keyword id="KW-1048">Host nucleus</keyword>
<keyword id="KW-0426">Late protein</keyword>
<keyword id="KW-1185">Reference proteome</keyword>
<keyword id="KW-0946">Virion</keyword>
<keyword id="KW-0920">Virion tegument</keyword>
<evidence type="ECO:0000250" key="1"/>
<evidence type="ECO:0000305" key="2"/>
<organismHost>
    <name type="scientific">Gallus gallus</name>
    <name type="common">Chicken</name>
    <dbReference type="NCBI Taxonomy" id="9031"/>
</organismHost>
<name>US10_GAHVM</name>
<gene>
    <name type="primary">MDV089</name>
</gene>
<protein>
    <recommendedName>
        <fullName>Virion protein US10 homolog</fullName>
    </recommendedName>
</protein>
<sequence length="213" mass="23599">MAMWSLRRKSSRSVQLRVDSPKEQSYDILSAGGEHVALLPKSVRSLARTILTAATISQAAMKAGKPPSSRLWGEIFDRMTVTLNEYDISASPFHPTDPTRKIVGRALRCIERAPLTHEEMDTRFTIMMYWCCLGHAGYCTVSRLYEKNVRLMDIVGSATGCGISPLPEIESYWKPLCRAVATKGNAAIGDDAELAHYLTNLRESPTGDGESYL</sequence>
<comment type="subcellular location">
    <subcellularLocation>
        <location>Virion tegument</location>
    </subcellularLocation>
    <subcellularLocation>
        <location evidence="1">Host nucleus matrix</location>
    </subcellularLocation>
</comment>
<comment type="induction">
    <text>Expressed late in the infection cycle.</text>
</comment>
<comment type="PTM">
    <text evidence="1">Phosphorylated.</text>
</comment>
<comment type="similarity">
    <text evidence="2">Belongs to the herpesviridae US10 family.</text>
</comment>
<feature type="chain" id="PRO_0000406531" description="Virion protein US10 homolog">
    <location>
        <begin position="1"/>
        <end position="213"/>
    </location>
</feature>
<organism>
    <name type="scientific">Gallid herpesvirus 2 (strain Chicken/Md5/ATCC VR-987)</name>
    <name type="common">GaHV-2</name>
    <name type="synonym">Marek's disease herpesvirus type 1</name>
    <dbReference type="NCBI Taxonomy" id="10389"/>
    <lineage>
        <taxon>Viruses</taxon>
        <taxon>Duplodnaviria</taxon>
        <taxon>Heunggongvirae</taxon>
        <taxon>Peploviricota</taxon>
        <taxon>Herviviricetes</taxon>
        <taxon>Herpesvirales</taxon>
        <taxon>Orthoherpesviridae</taxon>
        <taxon>Alphaherpesvirinae</taxon>
        <taxon>Mardivirus</taxon>
        <taxon>Mardivirus gallidalpha2</taxon>
        <taxon>Gallid alphaherpesvirus 2</taxon>
    </lineage>
</organism>
<proteinExistence type="evidence at transcript level"/>
<reference key="1">
    <citation type="journal article" date="2000" name="J. Virol.">
        <title>The genome of a very virulent Marek's disease virus.</title>
        <authorList>
            <person name="Tulman E.R."/>
            <person name="Afonso C.L."/>
            <person name="Lu Z."/>
            <person name="Zsak L."/>
            <person name="Rock D.L."/>
            <person name="Kutish G.F."/>
        </authorList>
    </citation>
    <scope>NUCLEOTIDE SEQUENCE [LARGE SCALE GENOMIC DNA]</scope>
</reference>
<accession>Q77MP8</accession>